<sequence>MLFPRIIAASAQRKLSVYLKKGGLVAYPTESCYGLGCLPTLAKALGKLAHLKKRPQHKGMIVIGNQFEQLQPLLQMPSENLQDMLRKEWPAPKTFLLSAKSCVLPELRGKQRSKLAVRVPAHVGARRLCQALQTPLVSTSCNRAGKRACRTEREVRRQFGRDVWIVGGRIGRQKSPSQIIDGETGKRLR</sequence>
<feature type="chain" id="PRO_0000352940" description="Threonylcarbamoyl-AMP synthase">
    <location>
        <begin position="1"/>
        <end position="189"/>
    </location>
</feature>
<feature type="domain" description="YrdC-like" evidence="1">
    <location>
        <begin position="9"/>
        <end position="189"/>
    </location>
</feature>
<comment type="function">
    <text evidence="1">Required for the formation of a threonylcarbamoyl group on adenosine at position 37 (t(6)A37) in tRNAs that read codons beginning with adenine. Catalyzes the conversion of L-threonine, HCO(3)(-)/CO(2) and ATP to give threonylcarbamoyl-AMP (TC-AMP) as the acyladenylate intermediate, with the release of diphosphate.</text>
</comment>
<comment type="catalytic activity">
    <reaction evidence="1">
        <text>L-threonine + hydrogencarbonate + ATP = L-threonylcarbamoyladenylate + diphosphate + H2O</text>
        <dbReference type="Rhea" id="RHEA:36407"/>
        <dbReference type="ChEBI" id="CHEBI:15377"/>
        <dbReference type="ChEBI" id="CHEBI:17544"/>
        <dbReference type="ChEBI" id="CHEBI:30616"/>
        <dbReference type="ChEBI" id="CHEBI:33019"/>
        <dbReference type="ChEBI" id="CHEBI:57926"/>
        <dbReference type="ChEBI" id="CHEBI:73682"/>
        <dbReference type="EC" id="2.7.7.87"/>
    </reaction>
</comment>
<comment type="subcellular location">
    <subcellularLocation>
        <location evidence="1">Cytoplasm</location>
    </subcellularLocation>
</comment>
<comment type="similarity">
    <text evidence="1">Belongs to the SUA5 family. TsaC subfamily.</text>
</comment>
<gene>
    <name evidence="1" type="primary">tsaC</name>
    <name type="synonym">rimN</name>
    <name type="ordered locus">NMCC_2108</name>
</gene>
<evidence type="ECO:0000255" key="1">
    <source>
        <dbReference type="HAMAP-Rule" id="MF_01852"/>
    </source>
</evidence>
<reference key="1">
    <citation type="journal article" date="2008" name="Genomics">
        <title>Characterization of ST-4821 complex, a unique Neisseria meningitidis clone.</title>
        <authorList>
            <person name="Peng J."/>
            <person name="Yang L."/>
            <person name="Yang F."/>
            <person name="Yang J."/>
            <person name="Yan Y."/>
            <person name="Nie H."/>
            <person name="Zhang X."/>
            <person name="Xiong Z."/>
            <person name="Jiang Y."/>
            <person name="Cheng F."/>
            <person name="Xu X."/>
            <person name="Chen S."/>
            <person name="Sun L."/>
            <person name="Li W."/>
            <person name="Shen Y."/>
            <person name="Shao Z."/>
            <person name="Liang X."/>
            <person name="Xu J."/>
            <person name="Jin Q."/>
        </authorList>
    </citation>
    <scope>NUCLEOTIDE SEQUENCE [LARGE SCALE GENOMIC DNA]</scope>
    <source>
        <strain>053442</strain>
    </source>
</reference>
<accession>A9M4K6</accession>
<dbReference type="EC" id="2.7.7.87" evidence="1"/>
<dbReference type="EMBL" id="CP000381">
    <property type="protein sequence ID" value="ABX74225.1"/>
    <property type="molecule type" value="Genomic_DNA"/>
</dbReference>
<dbReference type="RefSeq" id="WP_002231013.1">
    <property type="nucleotide sequence ID" value="NC_010120.1"/>
</dbReference>
<dbReference type="SMR" id="A9M4K6"/>
<dbReference type="KEGG" id="nmn:NMCC_2108"/>
<dbReference type="HOGENOM" id="CLU_031397_6_1_4"/>
<dbReference type="Proteomes" id="UP000001177">
    <property type="component" value="Chromosome"/>
</dbReference>
<dbReference type="GO" id="GO:0005737">
    <property type="term" value="C:cytoplasm"/>
    <property type="evidence" value="ECO:0007669"/>
    <property type="project" value="UniProtKB-SubCell"/>
</dbReference>
<dbReference type="GO" id="GO:0005524">
    <property type="term" value="F:ATP binding"/>
    <property type="evidence" value="ECO:0007669"/>
    <property type="project" value="UniProtKB-UniRule"/>
</dbReference>
<dbReference type="GO" id="GO:0003725">
    <property type="term" value="F:double-stranded RNA binding"/>
    <property type="evidence" value="ECO:0007669"/>
    <property type="project" value="InterPro"/>
</dbReference>
<dbReference type="GO" id="GO:0061710">
    <property type="term" value="F:L-threonylcarbamoyladenylate synthase"/>
    <property type="evidence" value="ECO:0007669"/>
    <property type="project" value="UniProtKB-EC"/>
</dbReference>
<dbReference type="GO" id="GO:0000049">
    <property type="term" value="F:tRNA binding"/>
    <property type="evidence" value="ECO:0007669"/>
    <property type="project" value="TreeGrafter"/>
</dbReference>
<dbReference type="GO" id="GO:0006450">
    <property type="term" value="P:regulation of translational fidelity"/>
    <property type="evidence" value="ECO:0007669"/>
    <property type="project" value="TreeGrafter"/>
</dbReference>
<dbReference type="GO" id="GO:0002949">
    <property type="term" value="P:tRNA threonylcarbamoyladenosine modification"/>
    <property type="evidence" value="ECO:0007669"/>
    <property type="project" value="UniProtKB-UniRule"/>
</dbReference>
<dbReference type="FunFam" id="3.90.870.10:FF:000004">
    <property type="entry name" value="Threonylcarbamoyl-AMP synthase"/>
    <property type="match status" value="1"/>
</dbReference>
<dbReference type="Gene3D" id="3.90.870.10">
    <property type="entry name" value="DHBP synthase"/>
    <property type="match status" value="1"/>
</dbReference>
<dbReference type="HAMAP" id="MF_01852">
    <property type="entry name" value="TsaC"/>
    <property type="match status" value="1"/>
</dbReference>
<dbReference type="InterPro" id="IPR017945">
    <property type="entry name" value="DHBP_synth_RibB-like_a/b_dom"/>
</dbReference>
<dbReference type="InterPro" id="IPR006070">
    <property type="entry name" value="Sua5-like_dom"/>
</dbReference>
<dbReference type="InterPro" id="IPR023535">
    <property type="entry name" value="TC-AMP_synthase"/>
</dbReference>
<dbReference type="InterPro" id="IPR050156">
    <property type="entry name" value="TC-AMP_synthase_SUA5"/>
</dbReference>
<dbReference type="PANTHER" id="PTHR17490">
    <property type="entry name" value="SUA5"/>
    <property type="match status" value="1"/>
</dbReference>
<dbReference type="PANTHER" id="PTHR17490:SF18">
    <property type="entry name" value="THREONYLCARBAMOYL-AMP SYNTHASE"/>
    <property type="match status" value="1"/>
</dbReference>
<dbReference type="Pfam" id="PF01300">
    <property type="entry name" value="Sua5_yciO_yrdC"/>
    <property type="match status" value="1"/>
</dbReference>
<dbReference type="SUPFAM" id="SSF55821">
    <property type="entry name" value="YrdC/RibB"/>
    <property type="match status" value="1"/>
</dbReference>
<dbReference type="PROSITE" id="PS51163">
    <property type="entry name" value="YRDC"/>
    <property type="match status" value="1"/>
</dbReference>
<organism>
    <name type="scientific">Neisseria meningitidis serogroup C (strain 053442)</name>
    <dbReference type="NCBI Taxonomy" id="374833"/>
    <lineage>
        <taxon>Bacteria</taxon>
        <taxon>Pseudomonadati</taxon>
        <taxon>Pseudomonadota</taxon>
        <taxon>Betaproteobacteria</taxon>
        <taxon>Neisseriales</taxon>
        <taxon>Neisseriaceae</taxon>
        <taxon>Neisseria</taxon>
    </lineage>
</organism>
<name>TSAC_NEIM0</name>
<proteinExistence type="inferred from homology"/>
<protein>
    <recommendedName>
        <fullName evidence="1">Threonylcarbamoyl-AMP synthase</fullName>
        <shortName evidence="1">TC-AMP synthase</shortName>
        <ecNumber evidence="1">2.7.7.87</ecNumber>
    </recommendedName>
    <alternativeName>
        <fullName evidence="1">L-threonylcarbamoyladenylate synthase</fullName>
    </alternativeName>
    <alternativeName>
        <fullName evidence="1">t(6)A37 threonylcarbamoyladenosine biosynthesis protein TsaC</fullName>
    </alternativeName>
    <alternativeName>
        <fullName evidence="1">tRNA threonylcarbamoyladenosine biosynthesis protein TsaC</fullName>
    </alternativeName>
</protein>
<keyword id="KW-0067">ATP-binding</keyword>
<keyword id="KW-0963">Cytoplasm</keyword>
<keyword id="KW-0547">Nucleotide-binding</keyword>
<keyword id="KW-0548">Nucleotidyltransferase</keyword>
<keyword id="KW-0808">Transferase</keyword>
<keyword id="KW-0819">tRNA processing</keyword>